<evidence type="ECO:0000250" key="1">
    <source>
        <dbReference type="UniProtKB" id="Q8BLY2"/>
    </source>
</evidence>
<evidence type="ECO:0000255" key="2"/>
<evidence type="ECO:0000255" key="3">
    <source>
        <dbReference type="PROSITE-ProRule" id="PRU01228"/>
    </source>
</evidence>
<evidence type="ECO:0000256" key="4">
    <source>
        <dbReference type="SAM" id="MobiDB-lite"/>
    </source>
</evidence>
<evidence type="ECO:0000305" key="5"/>
<reference key="1">
    <citation type="submission" date="2006-08" db="EMBL/GenBank/DDBJ databases">
        <authorList>
            <consortium name="NIH - Xenopus Gene Collection (XGC) project"/>
        </authorList>
    </citation>
    <scope>NUCLEOTIDE SEQUENCE [LARGE SCALE MRNA]</scope>
    <source>
        <tissue>Testis</tissue>
    </source>
</reference>
<dbReference type="EC" id="6.1.1.3" evidence="1"/>
<dbReference type="EMBL" id="BC121417">
    <property type="protein sequence ID" value="AAI21418.1"/>
    <property type="molecule type" value="mRNA"/>
</dbReference>
<dbReference type="RefSeq" id="NP_001096223.1">
    <property type="nucleotide sequence ID" value="NM_001102753.1"/>
</dbReference>
<dbReference type="SMR" id="Q0V9S0"/>
<dbReference type="FunCoup" id="Q0V9S0">
    <property type="interactions" value="1139"/>
</dbReference>
<dbReference type="STRING" id="8364.ENSXETP00000054472"/>
<dbReference type="PaxDb" id="8364-ENSXETP00000043847"/>
<dbReference type="DNASU" id="100124774"/>
<dbReference type="GeneID" id="100124774"/>
<dbReference type="KEGG" id="xtr:100124774"/>
<dbReference type="AGR" id="Xenbase:XB-GENE-5954362"/>
<dbReference type="CTD" id="123283"/>
<dbReference type="Xenbase" id="XB-GENE-5954362">
    <property type="gene designation" value="tars3"/>
</dbReference>
<dbReference type="eggNOG" id="KOG1637">
    <property type="taxonomic scope" value="Eukaryota"/>
</dbReference>
<dbReference type="HOGENOM" id="CLU_008554_0_2_1"/>
<dbReference type="InParanoid" id="Q0V9S0"/>
<dbReference type="OMA" id="WYADGMY"/>
<dbReference type="OrthoDB" id="5423599at2759"/>
<dbReference type="PhylomeDB" id="Q0V9S0"/>
<dbReference type="TreeFam" id="TF300858"/>
<dbReference type="Proteomes" id="UP000008143">
    <property type="component" value="Chromosome 3"/>
</dbReference>
<dbReference type="Bgee" id="ENSXETG00000020313">
    <property type="expression patterns" value="Expressed in testis and 13 other cell types or tissues"/>
</dbReference>
<dbReference type="ExpressionAtlas" id="Q0V9S0">
    <property type="expression patterns" value="baseline"/>
</dbReference>
<dbReference type="GO" id="GO:0005737">
    <property type="term" value="C:cytoplasm"/>
    <property type="evidence" value="ECO:0000250"/>
    <property type="project" value="UniProtKB"/>
</dbReference>
<dbReference type="GO" id="GO:0005634">
    <property type="term" value="C:nucleus"/>
    <property type="evidence" value="ECO:0000250"/>
    <property type="project" value="UniProtKB"/>
</dbReference>
<dbReference type="GO" id="GO:0005524">
    <property type="term" value="F:ATP binding"/>
    <property type="evidence" value="ECO:0007669"/>
    <property type="project" value="UniProtKB-KW"/>
</dbReference>
<dbReference type="GO" id="GO:0004829">
    <property type="term" value="F:threonine-tRNA ligase activity"/>
    <property type="evidence" value="ECO:0000250"/>
    <property type="project" value="UniProtKB"/>
</dbReference>
<dbReference type="GO" id="GO:0006435">
    <property type="term" value="P:threonyl-tRNA aminoacylation"/>
    <property type="evidence" value="ECO:0000250"/>
    <property type="project" value="UniProtKB"/>
</dbReference>
<dbReference type="CDD" id="cd01667">
    <property type="entry name" value="TGS_ThrRS"/>
    <property type="match status" value="1"/>
</dbReference>
<dbReference type="CDD" id="cd00860">
    <property type="entry name" value="ThrRS_anticodon"/>
    <property type="match status" value="1"/>
</dbReference>
<dbReference type="CDD" id="cd00771">
    <property type="entry name" value="ThrRS_core"/>
    <property type="match status" value="1"/>
</dbReference>
<dbReference type="FunFam" id="3.30.930.10:FF:000009">
    <property type="entry name" value="Threonine--tRNA ligase 2, cytoplasmic"/>
    <property type="match status" value="1"/>
</dbReference>
<dbReference type="FunFam" id="3.40.50.800:FF:000003">
    <property type="entry name" value="Threonine--tRNA ligase 2, cytoplasmic"/>
    <property type="match status" value="1"/>
</dbReference>
<dbReference type="FunFam" id="3.10.20.30:FF:000006">
    <property type="entry name" value="Threonine--tRNA ligase, cytoplasmic"/>
    <property type="match status" value="1"/>
</dbReference>
<dbReference type="FunFam" id="3.30.980.10:FF:000003">
    <property type="entry name" value="Threonine--tRNA ligase, cytoplasmic"/>
    <property type="match status" value="1"/>
</dbReference>
<dbReference type="Gene3D" id="3.10.20.30">
    <property type="match status" value="1"/>
</dbReference>
<dbReference type="Gene3D" id="3.40.50.800">
    <property type="entry name" value="Anticodon-binding domain"/>
    <property type="match status" value="1"/>
</dbReference>
<dbReference type="Gene3D" id="3.30.930.10">
    <property type="entry name" value="Bira Bifunctional Protein, Domain 2"/>
    <property type="match status" value="1"/>
</dbReference>
<dbReference type="Gene3D" id="3.30.980.10">
    <property type="entry name" value="Threonyl-trna Synthetase, Chain A, domain 2"/>
    <property type="match status" value="1"/>
</dbReference>
<dbReference type="HAMAP" id="MF_00184">
    <property type="entry name" value="Thr_tRNA_synth"/>
    <property type="match status" value="1"/>
</dbReference>
<dbReference type="InterPro" id="IPR002314">
    <property type="entry name" value="aa-tRNA-synt_IIb"/>
</dbReference>
<dbReference type="InterPro" id="IPR006195">
    <property type="entry name" value="aa-tRNA-synth_II"/>
</dbReference>
<dbReference type="InterPro" id="IPR045864">
    <property type="entry name" value="aa-tRNA-synth_II/BPL/LPL"/>
</dbReference>
<dbReference type="InterPro" id="IPR004154">
    <property type="entry name" value="Anticodon-bd"/>
</dbReference>
<dbReference type="InterPro" id="IPR036621">
    <property type="entry name" value="Anticodon-bd_dom_sf"/>
</dbReference>
<dbReference type="InterPro" id="IPR012675">
    <property type="entry name" value="Beta-grasp_dom_sf"/>
</dbReference>
<dbReference type="InterPro" id="IPR004095">
    <property type="entry name" value="TGS"/>
</dbReference>
<dbReference type="InterPro" id="IPR012676">
    <property type="entry name" value="TGS-like"/>
</dbReference>
<dbReference type="InterPro" id="IPR002320">
    <property type="entry name" value="Thr-tRNA-ligase_IIa"/>
</dbReference>
<dbReference type="InterPro" id="IPR018163">
    <property type="entry name" value="Thr/Ala-tRNA-synth_IIc_edit"/>
</dbReference>
<dbReference type="InterPro" id="IPR047246">
    <property type="entry name" value="ThrRS_anticodon"/>
</dbReference>
<dbReference type="InterPro" id="IPR033728">
    <property type="entry name" value="ThrRS_core"/>
</dbReference>
<dbReference type="InterPro" id="IPR012947">
    <property type="entry name" value="tRNA_SAD"/>
</dbReference>
<dbReference type="NCBIfam" id="TIGR00418">
    <property type="entry name" value="thrS"/>
    <property type="match status" value="1"/>
</dbReference>
<dbReference type="PANTHER" id="PTHR11451:SF38">
    <property type="entry name" value="THREONINE--TRNA LIGASE 2, CYTOPLASMIC"/>
    <property type="match status" value="1"/>
</dbReference>
<dbReference type="PANTHER" id="PTHR11451">
    <property type="entry name" value="THREONINE-TRNA LIGASE"/>
    <property type="match status" value="1"/>
</dbReference>
<dbReference type="Pfam" id="PF03129">
    <property type="entry name" value="HGTP_anticodon"/>
    <property type="match status" value="1"/>
</dbReference>
<dbReference type="Pfam" id="PF02824">
    <property type="entry name" value="TGS"/>
    <property type="match status" value="1"/>
</dbReference>
<dbReference type="Pfam" id="PF00587">
    <property type="entry name" value="tRNA-synt_2b"/>
    <property type="match status" value="1"/>
</dbReference>
<dbReference type="Pfam" id="PF07973">
    <property type="entry name" value="tRNA_SAD"/>
    <property type="match status" value="1"/>
</dbReference>
<dbReference type="PRINTS" id="PR01047">
    <property type="entry name" value="TRNASYNTHTHR"/>
</dbReference>
<dbReference type="SMART" id="SM00863">
    <property type="entry name" value="tRNA_SAD"/>
    <property type="match status" value="1"/>
</dbReference>
<dbReference type="SUPFAM" id="SSF52954">
    <property type="entry name" value="Class II aaRS ABD-related"/>
    <property type="match status" value="1"/>
</dbReference>
<dbReference type="SUPFAM" id="SSF55681">
    <property type="entry name" value="Class II aaRS and biotin synthetases"/>
    <property type="match status" value="1"/>
</dbReference>
<dbReference type="SUPFAM" id="SSF81271">
    <property type="entry name" value="TGS-like"/>
    <property type="match status" value="1"/>
</dbReference>
<dbReference type="SUPFAM" id="SSF55186">
    <property type="entry name" value="ThrRS/AlaRS common domain"/>
    <property type="match status" value="1"/>
</dbReference>
<dbReference type="PROSITE" id="PS50862">
    <property type="entry name" value="AA_TRNA_LIGASE_II"/>
    <property type="match status" value="1"/>
</dbReference>
<dbReference type="PROSITE" id="PS51880">
    <property type="entry name" value="TGS"/>
    <property type="match status" value="1"/>
</dbReference>
<gene>
    <name type="primary">tars3</name>
    <name type="synonym">tarsl2</name>
</gene>
<sequence length="814" mass="93328">MAAHIAQRLTVQEQEIRRLNEEIGRLLELGLQGSVEHSPNPVLEQLRAENEKLKYRISHLQRSLREEQERARPGQYGEPGLKDAAPVEEPKQQNNKAKEKGQATKGENSVGGKPSACEGNKKNEKKAGKEVDGHKQEGPCAPGFIKDRLALYETLKNEHDALLAARAAHQSKPIKITLADGKQVDGESWKTTPYQVAIGISKGLADNVVIAKVNNELWDLDRPLEQDSNVELLKFDSEEAQAVYWHSSAHILGETMENFYGGCLCYGPPIENGFYYDMYLDGRGVSSNEFPSLENMCKAIIKEKQPFERLEVSKDLLLEMFKYNKFKCRILNEKVDTPTTTVYRCGPLIDLCRGPHVRHTGKIKTLKIYKNSSTYWEGRADMETLQRIYGISFPDSKLMKEWEQFQEEAKNRDHRKIGRDQELFFFHDLSPGSCFFLPRGAHIYNTLTDFIKGEYQIRNFTEVASPNIYNSKLWEMSGHWQHYSENMFSFEVEKETFALKPMNCPGHCLMFGHRPRSWRELPLRFADFGVLHRNELSGTLSGLTRVRRFQQDDAHIFCTMDQIQEEMNGCLQFLQSVYKVFGFTFQLHLSTRPENYLGEIEIWNEAEKQLESSLNQFGEPWKLNPGDGAFYGPKIDIKIKDAIGRYHQCATIQLDFQLPIRFNLTYVSKDGDDKKRPVIIHRAILGSVERMIAILCENYGGKWPFWLSPRQVMVIPVGPSCDEYAQQVCKDVFEAGFMAEVDLDHSCTLNKKIRNAQLAQCNFILVVGEKEKTDSAVNVRTRDNKVHGEILLTSAIEKLKTLKKLRSKNAEEEF</sequence>
<name>SYTC2_XENTR</name>
<feature type="chain" id="PRO_0000333830" description="Threonine--tRNA ligase 2, cytoplasmic">
    <location>
        <begin position="1"/>
        <end position="814"/>
    </location>
</feature>
<feature type="domain" description="TGS" evidence="3">
    <location>
        <begin position="172"/>
        <end position="234"/>
    </location>
</feature>
<feature type="region of interest" description="Disordered" evidence="4">
    <location>
        <begin position="62"/>
        <end position="142"/>
    </location>
</feature>
<feature type="coiled-coil region" evidence="2">
    <location>
        <begin position="2"/>
        <end position="72"/>
    </location>
</feature>
<feature type="short sequence motif" description="Nuclear localization signal" evidence="1">
    <location>
        <begin position="798"/>
        <end position="804"/>
    </location>
</feature>
<feature type="compositionally biased region" description="Basic and acidic residues" evidence="4">
    <location>
        <begin position="63"/>
        <end position="72"/>
    </location>
</feature>
<feature type="compositionally biased region" description="Basic and acidic residues" evidence="4">
    <location>
        <begin position="88"/>
        <end position="102"/>
    </location>
</feature>
<feature type="compositionally biased region" description="Basic and acidic residues" evidence="4">
    <location>
        <begin position="119"/>
        <end position="137"/>
    </location>
</feature>
<accession>Q0V9S0</accession>
<protein>
    <recommendedName>
        <fullName>Threonine--tRNA ligase 2, cytoplasmic</fullName>
        <ecNumber evidence="1">6.1.1.3</ecNumber>
    </recommendedName>
    <alternativeName>
        <fullName>Threonyl-tRNA synthetase</fullName>
        <shortName>ThrRS</shortName>
    </alternativeName>
    <alternativeName>
        <fullName>Threonyl-tRNA synthetase protein 3</fullName>
    </alternativeName>
</protein>
<comment type="function">
    <text evidence="1">Catalyzes the attachment of threonine to tRNA(Thr) in a two-step reaction: threonine is first activated by ATP to form Thr-AMP and then transferred to the acceptor end of tRNA(Thr). Also edits incorrectly charged tRNA(Thr) via its editing domain, at the post-transfer stage.</text>
</comment>
<comment type="catalytic activity">
    <reaction evidence="1">
        <text>tRNA(Thr) + L-threonine + ATP = L-threonyl-tRNA(Thr) + AMP + diphosphate + H(+)</text>
        <dbReference type="Rhea" id="RHEA:24624"/>
        <dbReference type="Rhea" id="RHEA-COMP:9670"/>
        <dbReference type="Rhea" id="RHEA-COMP:9704"/>
        <dbReference type="ChEBI" id="CHEBI:15378"/>
        <dbReference type="ChEBI" id="CHEBI:30616"/>
        <dbReference type="ChEBI" id="CHEBI:33019"/>
        <dbReference type="ChEBI" id="CHEBI:57926"/>
        <dbReference type="ChEBI" id="CHEBI:78442"/>
        <dbReference type="ChEBI" id="CHEBI:78534"/>
        <dbReference type="ChEBI" id="CHEBI:456215"/>
        <dbReference type="EC" id="6.1.1.3"/>
    </reaction>
</comment>
<comment type="subcellular location">
    <subcellularLocation>
        <location evidence="1">Cytoplasm</location>
    </subcellularLocation>
    <subcellularLocation>
        <location evidence="1">Nucleus</location>
    </subcellularLocation>
    <text evidence="1">Primarily cytoplasmic. Also detected at lower levels in the nucleus.</text>
</comment>
<comment type="similarity">
    <text evidence="5">Belongs to the class-II aminoacyl-tRNA synthetase family.</text>
</comment>
<proteinExistence type="evidence at transcript level"/>
<keyword id="KW-0030">Aminoacyl-tRNA synthetase</keyword>
<keyword id="KW-0067">ATP-binding</keyword>
<keyword id="KW-0175">Coiled coil</keyword>
<keyword id="KW-0963">Cytoplasm</keyword>
<keyword id="KW-0436">Ligase</keyword>
<keyword id="KW-0547">Nucleotide-binding</keyword>
<keyword id="KW-0539">Nucleus</keyword>
<keyword id="KW-0648">Protein biosynthesis</keyword>
<keyword id="KW-1185">Reference proteome</keyword>
<organism>
    <name type="scientific">Xenopus tropicalis</name>
    <name type="common">Western clawed frog</name>
    <name type="synonym">Silurana tropicalis</name>
    <dbReference type="NCBI Taxonomy" id="8364"/>
    <lineage>
        <taxon>Eukaryota</taxon>
        <taxon>Metazoa</taxon>
        <taxon>Chordata</taxon>
        <taxon>Craniata</taxon>
        <taxon>Vertebrata</taxon>
        <taxon>Euteleostomi</taxon>
        <taxon>Amphibia</taxon>
        <taxon>Batrachia</taxon>
        <taxon>Anura</taxon>
        <taxon>Pipoidea</taxon>
        <taxon>Pipidae</taxon>
        <taxon>Xenopodinae</taxon>
        <taxon>Xenopus</taxon>
        <taxon>Silurana</taxon>
    </lineage>
</organism>